<accession>Q2KEW0</accession>
<accession>A0A151V4G6</accession>
<accession>A4RAR8</accession>
<sequence>MPSYGSLHSPSLRKMEHSRGQYGGGRKGMSLGNVIGDPFALATISIAGLAWLIAFIASIVAQIQTTQGFPTYTWWTVVFYFFLIPGVFVVVASDTIQTYHVALVGYMACGLVLTTSSVNGLVYSTNGAKEAAAAGFILLSMVTIVWIFYFGSAPSAMPRAYLDSFALSKESTSNNRQTMTGGGYGIGRPETSTSVQPPQMYTSAQLNGFENPSPVNGMRNSGAPPSGFPTTPGPASGLPKTTTPPAGGAADAEIVPPTEYPYRAKAIYTYEANPDDANEISFSKHEILEVSDVSGRWWQARKETGETGIAPSNYLILL</sequence>
<protein>
    <recommendedName>
        <fullName evidence="6">Cell surface sensor SHO1</fullName>
    </recommendedName>
</protein>
<gene>
    <name evidence="6" type="primary">SHO1</name>
    <name type="ORF">MGCH7_ch7g926</name>
    <name type="ORF">MGG_09125</name>
</gene>
<name>SHO1_PYRO7</name>
<dbReference type="EMBL" id="CM000230">
    <property type="protein sequence ID" value="EAQ71519.1"/>
    <property type="status" value="ALT_INIT"/>
    <property type="molecule type" value="Genomic_DNA"/>
</dbReference>
<dbReference type="EMBL" id="JH165175">
    <property type="protein sequence ID" value="KYQ30473.1"/>
    <property type="molecule type" value="Genomic_DNA"/>
</dbReference>
<dbReference type="RefSeq" id="XP_016845977.1">
    <property type="nucleotide sequence ID" value="XM_016990454.1"/>
</dbReference>
<dbReference type="SMR" id="Q2KEW0"/>
<dbReference type="FunCoup" id="Q2KEW0">
    <property type="interactions" value="132"/>
</dbReference>
<dbReference type="STRING" id="242507.Q2KEW0"/>
<dbReference type="EnsemblFungi" id="MGG_09125T0">
    <property type="protein sequence ID" value="MGG_09125T0"/>
    <property type="gene ID" value="MGG_09125"/>
</dbReference>
<dbReference type="GeneID" id="2680112"/>
<dbReference type="KEGG" id="mgr:MGG_09125"/>
<dbReference type="VEuPathDB" id="FungiDB:MGG_09125"/>
<dbReference type="eggNOG" id="ENOG502QW7A">
    <property type="taxonomic scope" value="Eukaryota"/>
</dbReference>
<dbReference type="InParanoid" id="Q2KEW0"/>
<dbReference type="OMA" id="NIVWIFY"/>
<dbReference type="OrthoDB" id="5983572at2759"/>
<dbReference type="PHI-base" id="PHI:2160"/>
<dbReference type="Proteomes" id="UP000009058">
    <property type="component" value="Unassembled WGS sequence"/>
</dbReference>
<dbReference type="GO" id="GO:0005886">
    <property type="term" value="C:plasma membrane"/>
    <property type="evidence" value="ECO:0007669"/>
    <property type="project" value="UniProtKB-SubCell"/>
</dbReference>
<dbReference type="CDD" id="cd11855">
    <property type="entry name" value="SH3_Sho1p"/>
    <property type="match status" value="1"/>
</dbReference>
<dbReference type="FunFam" id="2.30.30.40:FF:000213">
    <property type="entry name" value="High osmolarity signaling protein SHO1"/>
    <property type="match status" value="1"/>
</dbReference>
<dbReference type="Gene3D" id="2.30.30.40">
    <property type="entry name" value="SH3 Domains"/>
    <property type="match status" value="1"/>
</dbReference>
<dbReference type="InterPro" id="IPR036028">
    <property type="entry name" value="SH3-like_dom_sf"/>
</dbReference>
<dbReference type="InterPro" id="IPR001452">
    <property type="entry name" value="SH3_domain"/>
</dbReference>
<dbReference type="InterPro" id="IPR035522">
    <property type="entry name" value="Sho1_SH3"/>
</dbReference>
<dbReference type="Pfam" id="PF00018">
    <property type="entry name" value="SH3_1"/>
    <property type="match status" value="1"/>
</dbReference>
<dbReference type="PRINTS" id="PR00452">
    <property type="entry name" value="SH3DOMAIN"/>
</dbReference>
<dbReference type="SMART" id="SM00326">
    <property type="entry name" value="SH3"/>
    <property type="match status" value="1"/>
</dbReference>
<dbReference type="SUPFAM" id="SSF50044">
    <property type="entry name" value="SH3-domain"/>
    <property type="match status" value="1"/>
</dbReference>
<dbReference type="PROSITE" id="PS50002">
    <property type="entry name" value="SH3"/>
    <property type="match status" value="1"/>
</dbReference>
<reference key="1">
    <citation type="submission" date="2005-01" db="EMBL/GenBank/DDBJ databases">
        <title>The sequence of Magnaporthe grisea chromosome 7.</title>
        <authorList>
            <person name="Thon M.R."/>
            <person name="Pan H."/>
            <person name="Diener A."/>
            <person name="Papalas J."/>
            <person name="Taro A."/>
            <person name="Mitchell T."/>
            <person name="Dean R.A."/>
        </authorList>
    </citation>
    <scope>NUCLEOTIDE SEQUENCE [LARGE SCALE GENOMIC DNA]</scope>
    <source>
        <strain>70-15 / ATCC MYA-4617 / FGSC 8958</strain>
    </source>
</reference>
<reference key="2">
    <citation type="journal article" date="2005" name="Nature">
        <title>The genome sequence of the rice blast fungus Magnaporthe grisea.</title>
        <authorList>
            <person name="Dean R.A."/>
            <person name="Talbot N.J."/>
            <person name="Ebbole D.J."/>
            <person name="Farman M.L."/>
            <person name="Mitchell T.K."/>
            <person name="Orbach M.J."/>
            <person name="Thon M.R."/>
            <person name="Kulkarni R."/>
            <person name="Xu J.-R."/>
            <person name="Pan H."/>
            <person name="Read N.D."/>
            <person name="Lee Y.-H."/>
            <person name="Carbone I."/>
            <person name="Brown D."/>
            <person name="Oh Y.Y."/>
            <person name="Donofrio N."/>
            <person name="Jeong J.S."/>
            <person name="Soanes D.M."/>
            <person name="Djonovic S."/>
            <person name="Kolomiets E."/>
            <person name="Rehmeyer C."/>
            <person name="Li W."/>
            <person name="Harding M."/>
            <person name="Kim S."/>
            <person name="Lebrun M.-H."/>
            <person name="Bohnert H."/>
            <person name="Coughlan S."/>
            <person name="Butler J."/>
            <person name="Calvo S.E."/>
            <person name="Ma L.-J."/>
            <person name="Nicol R."/>
            <person name="Purcell S."/>
            <person name="Nusbaum C."/>
            <person name="Galagan J.E."/>
            <person name="Birren B.W."/>
        </authorList>
    </citation>
    <scope>NUCLEOTIDE SEQUENCE [LARGE SCALE GENOMIC DNA]</scope>
    <source>
        <strain>70-15 / ATCC MYA-4617 / FGSC 8958</strain>
    </source>
</reference>
<reference key="3">
    <citation type="journal article" date="2011" name="PLoS Pathog.">
        <title>Multiple plant surface signals are sensed by different mechanisms in the rice blast fungus for appressorium formation.</title>
        <authorList>
            <person name="Liu W."/>
            <person name="Zhou X."/>
            <person name="Li G."/>
            <person name="Li L."/>
            <person name="Kong L."/>
            <person name="Wang C."/>
            <person name="Zhang H."/>
            <person name="Xu J.R."/>
        </authorList>
    </citation>
    <scope>FUNCTION</scope>
    <scope>INDUCTION</scope>
    <scope>DISRUPTION PHENOTYPE</scope>
</reference>
<feature type="chain" id="PRO_0000410382" description="Cell surface sensor SHO1">
    <location>
        <begin position="1"/>
        <end position="318"/>
    </location>
</feature>
<feature type="topological domain" description="Cytoplasmic" evidence="2">
    <location>
        <begin position="1"/>
        <end position="38"/>
    </location>
</feature>
<feature type="transmembrane region" description="Helical" evidence="2">
    <location>
        <begin position="39"/>
        <end position="59"/>
    </location>
</feature>
<feature type="topological domain" description="Extracellular" evidence="2">
    <location>
        <begin position="60"/>
        <end position="71"/>
    </location>
</feature>
<feature type="transmembrane region" description="Helical" evidence="2">
    <location>
        <begin position="72"/>
        <end position="92"/>
    </location>
</feature>
<feature type="topological domain" description="Cytoplasmic" evidence="2">
    <location>
        <begin position="93"/>
        <end position="100"/>
    </location>
</feature>
<feature type="transmembrane region" description="Helical" evidence="2">
    <location>
        <begin position="101"/>
        <end position="121"/>
    </location>
</feature>
<feature type="topological domain" description="Extracellular" evidence="2">
    <location>
        <begin position="122"/>
        <end position="130"/>
    </location>
</feature>
<feature type="transmembrane region" description="Helical" evidence="2">
    <location>
        <begin position="131"/>
        <end position="151"/>
    </location>
</feature>
<feature type="topological domain" description="Cytoplasmic" evidence="2">
    <location>
        <begin position="152"/>
        <end position="318"/>
    </location>
</feature>
<feature type="domain" description="SH3" evidence="3">
    <location>
        <begin position="259"/>
        <end position="318"/>
    </location>
</feature>
<feature type="region of interest" description="Disordered" evidence="4">
    <location>
        <begin position="1"/>
        <end position="23"/>
    </location>
</feature>
<feature type="region of interest" description="Disordered" evidence="4">
    <location>
        <begin position="172"/>
        <end position="255"/>
    </location>
</feature>
<feature type="compositionally biased region" description="Polar residues" evidence="4">
    <location>
        <begin position="190"/>
        <end position="214"/>
    </location>
</feature>
<feature type="compositionally biased region" description="Low complexity" evidence="4">
    <location>
        <begin position="237"/>
        <end position="250"/>
    </location>
</feature>
<comment type="function">
    <text evidence="5">MSB2 and SHO1 have overlapping functions in recognizing various surface signals for MAPK PMK1 activation and appressorium formation (PubMed:21283781). While MSB2 is critical for sensing surface hydrophobicity and cutin monomers, SHO1 may play a more important role in recognizing rice leaf waxes (PubMed:21283781).</text>
</comment>
<comment type="subunit">
    <text evidence="1">Forms homooligomers.</text>
</comment>
<comment type="subcellular location">
    <subcellularLocation>
        <location evidence="8">Cell membrane</location>
        <topology evidence="2">Multi-pass membrane protein</topology>
    </subcellularLocation>
</comment>
<comment type="induction">
    <text evidence="5">Expression is significantly reduced when PMK1 is disrupted.</text>
</comment>
<comment type="disruption phenotype">
    <text evidence="5">Reduces only slightly appressorium formation and virulence.</text>
</comment>
<comment type="similarity">
    <text evidence="7">Belongs to the SHO1 family.</text>
</comment>
<comment type="sequence caution" evidence="7">
    <conflict type="erroneous initiation">
        <sequence resource="EMBL-CDS" id="EAQ71519"/>
    </conflict>
    <text>Truncated N-terminus.</text>
</comment>
<evidence type="ECO:0000250" key="1">
    <source>
        <dbReference type="UniProtKB" id="P40073"/>
    </source>
</evidence>
<evidence type="ECO:0000255" key="2"/>
<evidence type="ECO:0000255" key="3">
    <source>
        <dbReference type="PROSITE-ProRule" id="PRU00192"/>
    </source>
</evidence>
<evidence type="ECO:0000256" key="4">
    <source>
        <dbReference type="SAM" id="MobiDB-lite"/>
    </source>
</evidence>
<evidence type="ECO:0000269" key="5">
    <source>
    </source>
</evidence>
<evidence type="ECO:0000303" key="6">
    <source>
    </source>
</evidence>
<evidence type="ECO:0000305" key="7"/>
<evidence type="ECO:0000305" key="8">
    <source>
    </source>
</evidence>
<organism>
    <name type="scientific">Pyricularia oryzae (strain 70-15 / ATCC MYA-4617 / FGSC 8958)</name>
    <name type="common">Rice blast fungus</name>
    <name type="synonym">Magnaporthe oryzae</name>
    <dbReference type="NCBI Taxonomy" id="242507"/>
    <lineage>
        <taxon>Eukaryota</taxon>
        <taxon>Fungi</taxon>
        <taxon>Dikarya</taxon>
        <taxon>Ascomycota</taxon>
        <taxon>Pezizomycotina</taxon>
        <taxon>Sordariomycetes</taxon>
        <taxon>Sordariomycetidae</taxon>
        <taxon>Magnaporthales</taxon>
        <taxon>Pyriculariaceae</taxon>
        <taxon>Pyricularia</taxon>
    </lineage>
</organism>
<proteinExistence type="evidence at transcript level"/>
<keyword id="KW-1003">Cell membrane</keyword>
<keyword id="KW-0472">Membrane</keyword>
<keyword id="KW-1185">Reference proteome</keyword>
<keyword id="KW-0728">SH3 domain</keyword>
<keyword id="KW-0346">Stress response</keyword>
<keyword id="KW-0812">Transmembrane</keyword>
<keyword id="KW-1133">Transmembrane helix</keyword>
<keyword id="KW-0843">Virulence</keyword>